<proteinExistence type="inferred from homology"/>
<feature type="chain" id="PRO_1000068211" description="Hydroxyacylglutathione hydrolase">
    <location>
        <begin position="1"/>
        <end position="251"/>
    </location>
</feature>
<feature type="binding site" evidence="1">
    <location>
        <position position="53"/>
    </location>
    <ligand>
        <name>Zn(2+)</name>
        <dbReference type="ChEBI" id="CHEBI:29105"/>
        <label>1</label>
    </ligand>
</feature>
<feature type="binding site" evidence="1">
    <location>
        <position position="55"/>
    </location>
    <ligand>
        <name>Zn(2+)</name>
        <dbReference type="ChEBI" id="CHEBI:29105"/>
        <label>1</label>
    </ligand>
</feature>
<feature type="binding site" evidence="1">
    <location>
        <position position="57"/>
    </location>
    <ligand>
        <name>Zn(2+)</name>
        <dbReference type="ChEBI" id="CHEBI:29105"/>
        <label>2</label>
    </ligand>
</feature>
<feature type="binding site" evidence="1">
    <location>
        <position position="58"/>
    </location>
    <ligand>
        <name>Zn(2+)</name>
        <dbReference type="ChEBI" id="CHEBI:29105"/>
        <label>2</label>
    </ligand>
</feature>
<feature type="binding site" evidence="1">
    <location>
        <position position="110"/>
    </location>
    <ligand>
        <name>Zn(2+)</name>
        <dbReference type="ChEBI" id="CHEBI:29105"/>
        <label>1</label>
    </ligand>
</feature>
<feature type="binding site" evidence="1">
    <location>
        <position position="127"/>
    </location>
    <ligand>
        <name>Zn(2+)</name>
        <dbReference type="ChEBI" id="CHEBI:29105"/>
        <label>1</label>
    </ligand>
</feature>
<feature type="binding site" evidence="1">
    <location>
        <position position="127"/>
    </location>
    <ligand>
        <name>Zn(2+)</name>
        <dbReference type="ChEBI" id="CHEBI:29105"/>
        <label>2</label>
    </ligand>
</feature>
<feature type="binding site" evidence="1">
    <location>
        <position position="165"/>
    </location>
    <ligand>
        <name>Zn(2+)</name>
        <dbReference type="ChEBI" id="CHEBI:29105"/>
        <label>2</label>
    </ligand>
</feature>
<organism>
    <name type="scientific">Citrobacter koseri (strain ATCC BAA-895 / CDC 4225-83 / SGSC4696)</name>
    <dbReference type="NCBI Taxonomy" id="290338"/>
    <lineage>
        <taxon>Bacteria</taxon>
        <taxon>Pseudomonadati</taxon>
        <taxon>Pseudomonadota</taxon>
        <taxon>Gammaproteobacteria</taxon>
        <taxon>Enterobacterales</taxon>
        <taxon>Enterobacteriaceae</taxon>
        <taxon>Citrobacter</taxon>
    </lineage>
</organism>
<name>GLO2_CITK8</name>
<keyword id="KW-0378">Hydrolase</keyword>
<keyword id="KW-0479">Metal-binding</keyword>
<keyword id="KW-1185">Reference proteome</keyword>
<keyword id="KW-0862">Zinc</keyword>
<sequence length="251" mass="28536">MNLNSIPAFQDNYIWVLSNNEGRCLIVDPGEAAPVLNAIKEKNWQPEAIFLTHHHHDHVGGVKELLQHFPHVVVYGPAETQDKGTTRVVKDGDSALVLGHEFSIFATPGHTLGHICYFSHPYLFCGDTLFSGGCGRLFEGTASQMYQSLKKISALPDDTLICCAHEYTLANMKFALSILPHDSFINEYYRKVNELRAKNQITLPVILKNERKNNIFLRTEDPDLINEINKETKLQQPEERFAWLRSKKDSF</sequence>
<comment type="function">
    <text evidence="1">Thiolesterase that catalyzes the hydrolysis of S-D-lactoyl-glutathione to form glutathione and D-lactic acid.</text>
</comment>
<comment type="catalytic activity">
    <reaction evidence="1">
        <text>an S-(2-hydroxyacyl)glutathione + H2O = a 2-hydroxy carboxylate + glutathione + H(+)</text>
        <dbReference type="Rhea" id="RHEA:21864"/>
        <dbReference type="ChEBI" id="CHEBI:15377"/>
        <dbReference type="ChEBI" id="CHEBI:15378"/>
        <dbReference type="ChEBI" id="CHEBI:57925"/>
        <dbReference type="ChEBI" id="CHEBI:58896"/>
        <dbReference type="ChEBI" id="CHEBI:71261"/>
        <dbReference type="EC" id="3.1.2.6"/>
    </reaction>
</comment>
<comment type="cofactor">
    <cofactor evidence="1">
        <name>Zn(2+)</name>
        <dbReference type="ChEBI" id="CHEBI:29105"/>
    </cofactor>
    <text evidence="1">Binds 2 Zn(2+) ions per subunit.</text>
</comment>
<comment type="pathway">
    <text evidence="1">Secondary metabolite metabolism; methylglyoxal degradation; (R)-lactate from methylglyoxal: step 2/2.</text>
</comment>
<comment type="subunit">
    <text evidence="1">Monomer.</text>
</comment>
<comment type="similarity">
    <text evidence="1">Belongs to the metallo-beta-lactamase superfamily. Glyoxalase II family.</text>
</comment>
<reference key="1">
    <citation type="submission" date="2007-08" db="EMBL/GenBank/DDBJ databases">
        <authorList>
            <consortium name="The Citrobacter koseri Genome Sequencing Project"/>
            <person name="McClelland M."/>
            <person name="Sanderson E.K."/>
            <person name="Porwollik S."/>
            <person name="Spieth J."/>
            <person name="Clifton W.S."/>
            <person name="Latreille P."/>
            <person name="Courtney L."/>
            <person name="Wang C."/>
            <person name="Pepin K."/>
            <person name="Bhonagiri V."/>
            <person name="Nash W."/>
            <person name="Johnson M."/>
            <person name="Thiruvilangam P."/>
            <person name="Wilson R."/>
        </authorList>
    </citation>
    <scope>NUCLEOTIDE SEQUENCE [LARGE SCALE GENOMIC DNA]</scope>
    <source>
        <strain>ATCC BAA-895 / CDC 4225-83 / SGSC4696</strain>
    </source>
</reference>
<evidence type="ECO:0000255" key="1">
    <source>
        <dbReference type="HAMAP-Rule" id="MF_01374"/>
    </source>
</evidence>
<protein>
    <recommendedName>
        <fullName evidence="1">Hydroxyacylglutathione hydrolase</fullName>
        <ecNumber evidence="1">3.1.2.6</ecNumber>
    </recommendedName>
    <alternativeName>
        <fullName evidence="1">Glyoxalase II</fullName>
        <shortName evidence="1">Glx II</shortName>
    </alternativeName>
</protein>
<gene>
    <name evidence="1" type="primary">gloB</name>
    <name type="ordered locus">CKO_02971</name>
</gene>
<accession>A8AKR2</accession>
<dbReference type="EC" id="3.1.2.6" evidence="1"/>
<dbReference type="EMBL" id="CP000822">
    <property type="protein sequence ID" value="ABV14075.1"/>
    <property type="molecule type" value="Genomic_DNA"/>
</dbReference>
<dbReference type="RefSeq" id="WP_012133786.1">
    <property type="nucleotide sequence ID" value="NC_009792.1"/>
</dbReference>
<dbReference type="SMR" id="A8AKR2"/>
<dbReference type="STRING" id="290338.CKO_02971"/>
<dbReference type="GeneID" id="45136786"/>
<dbReference type="KEGG" id="cko:CKO_02971"/>
<dbReference type="HOGENOM" id="CLU_030571_4_1_6"/>
<dbReference type="OrthoDB" id="9802248at2"/>
<dbReference type="UniPathway" id="UPA00619">
    <property type="reaction ID" value="UER00676"/>
</dbReference>
<dbReference type="Proteomes" id="UP000008148">
    <property type="component" value="Chromosome"/>
</dbReference>
<dbReference type="GO" id="GO:0004416">
    <property type="term" value="F:hydroxyacylglutathione hydrolase activity"/>
    <property type="evidence" value="ECO:0007669"/>
    <property type="project" value="UniProtKB-UniRule"/>
</dbReference>
<dbReference type="GO" id="GO:0046872">
    <property type="term" value="F:metal ion binding"/>
    <property type="evidence" value="ECO:0007669"/>
    <property type="project" value="UniProtKB-KW"/>
</dbReference>
<dbReference type="GO" id="GO:0019243">
    <property type="term" value="P:methylglyoxal catabolic process to D-lactate via S-lactoyl-glutathione"/>
    <property type="evidence" value="ECO:0007669"/>
    <property type="project" value="InterPro"/>
</dbReference>
<dbReference type="CDD" id="cd07723">
    <property type="entry name" value="hydroxyacylglutathione_hydrolase_MBL-fold"/>
    <property type="match status" value="1"/>
</dbReference>
<dbReference type="Gene3D" id="3.60.15.10">
    <property type="entry name" value="Ribonuclease Z/Hydroxyacylglutathione hydrolase-like"/>
    <property type="match status" value="1"/>
</dbReference>
<dbReference type="HAMAP" id="MF_01374">
    <property type="entry name" value="Glyoxalase_2"/>
    <property type="match status" value="1"/>
</dbReference>
<dbReference type="InterPro" id="IPR035680">
    <property type="entry name" value="Clx_II_MBL"/>
</dbReference>
<dbReference type="InterPro" id="IPR050110">
    <property type="entry name" value="Glyoxalase_II_hydrolase"/>
</dbReference>
<dbReference type="InterPro" id="IPR032282">
    <property type="entry name" value="HAGH_C"/>
</dbReference>
<dbReference type="InterPro" id="IPR017782">
    <property type="entry name" value="Hydroxyacylglutathione_Hdrlase"/>
</dbReference>
<dbReference type="InterPro" id="IPR001279">
    <property type="entry name" value="Metallo-B-lactamas"/>
</dbReference>
<dbReference type="InterPro" id="IPR036866">
    <property type="entry name" value="RibonucZ/Hydroxyglut_hydro"/>
</dbReference>
<dbReference type="NCBIfam" id="TIGR03413">
    <property type="entry name" value="GSH_gloB"/>
    <property type="match status" value="1"/>
</dbReference>
<dbReference type="NCBIfam" id="NF007597">
    <property type="entry name" value="PRK10241.1"/>
    <property type="match status" value="1"/>
</dbReference>
<dbReference type="PANTHER" id="PTHR43705">
    <property type="entry name" value="HYDROXYACYLGLUTATHIONE HYDROLASE"/>
    <property type="match status" value="1"/>
</dbReference>
<dbReference type="PANTHER" id="PTHR43705:SF1">
    <property type="entry name" value="HYDROXYACYLGLUTATHIONE HYDROLASE GLOB"/>
    <property type="match status" value="1"/>
</dbReference>
<dbReference type="Pfam" id="PF16123">
    <property type="entry name" value="HAGH_C"/>
    <property type="match status" value="1"/>
</dbReference>
<dbReference type="Pfam" id="PF00753">
    <property type="entry name" value="Lactamase_B"/>
    <property type="match status" value="1"/>
</dbReference>
<dbReference type="PIRSF" id="PIRSF005457">
    <property type="entry name" value="Glx"/>
    <property type="match status" value="1"/>
</dbReference>
<dbReference type="SMART" id="SM00849">
    <property type="entry name" value="Lactamase_B"/>
    <property type="match status" value="1"/>
</dbReference>
<dbReference type="SUPFAM" id="SSF56281">
    <property type="entry name" value="Metallo-hydrolase/oxidoreductase"/>
    <property type="match status" value="1"/>
</dbReference>